<gene>
    <name evidence="1" type="primary">gcvH</name>
    <name type="ordered locus">LBF_3077</name>
</gene>
<proteinExistence type="inferred from homology"/>
<comment type="function">
    <text evidence="1">The glycine cleavage system catalyzes the degradation of glycine. The H protein shuttles the methylamine group of glycine from the P protein to the T protein.</text>
</comment>
<comment type="cofactor">
    <cofactor evidence="1">
        <name>(R)-lipoate</name>
        <dbReference type="ChEBI" id="CHEBI:83088"/>
    </cofactor>
    <text evidence="1">Binds 1 lipoyl cofactor covalently.</text>
</comment>
<comment type="subunit">
    <text evidence="1">The glycine cleavage system is composed of four proteins: P, T, L and H.</text>
</comment>
<comment type="similarity">
    <text evidence="1">Belongs to the GcvH family.</text>
</comment>
<sequence length="130" mass="14171">MADTQAKDGYYYTEKHEWVKVEGDVALIGITDFAQNALGDIVFIDLPKPGKQIKAKDSLGTIESVKAAEDLYSPISGEVVETNATLGSNPQAVNAEPFDTWMVKLKNIQTSELGGLLTAAQYKEYVSKLD</sequence>
<evidence type="ECO:0000255" key="1">
    <source>
        <dbReference type="HAMAP-Rule" id="MF_00272"/>
    </source>
</evidence>
<evidence type="ECO:0000255" key="2">
    <source>
        <dbReference type="PROSITE-ProRule" id="PRU01066"/>
    </source>
</evidence>
<protein>
    <recommendedName>
        <fullName evidence="1">Glycine cleavage system H protein</fullName>
    </recommendedName>
</protein>
<dbReference type="EMBL" id="CP000777">
    <property type="protein sequence ID" value="ABZ95546.1"/>
    <property type="molecule type" value="Genomic_DNA"/>
</dbReference>
<dbReference type="RefSeq" id="WP_012390110.1">
    <property type="nucleotide sequence ID" value="NC_010842.1"/>
</dbReference>
<dbReference type="SMR" id="B0SGN9"/>
<dbReference type="KEGG" id="lbf:LBF_3077"/>
<dbReference type="HOGENOM" id="CLU_097408_2_2_12"/>
<dbReference type="GO" id="GO:0005829">
    <property type="term" value="C:cytosol"/>
    <property type="evidence" value="ECO:0007669"/>
    <property type="project" value="TreeGrafter"/>
</dbReference>
<dbReference type="GO" id="GO:0005960">
    <property type="term" value="C:glycine cleavage complex"/>
    <property type="evidence" value="ECO:0007669"/>
    <property type="project" value="InterPro"/>
</dbReference>
<dbReference type="GO" id="GO:0019464">
    <property type="term" value="P:glycine decarboxylation via glycine cleavage system"/>
    <property type="evidence" value="ECO:0007669"/>
    <property type="project" value="UniProtKB-UniRule"/>
</dbReference>
<dbReference type="CDD" id="cd06848">
    <property type="entry name" value="GCS_H"/>
    <property type="match status" value="1"/>
</dbReference>
<dbReference type="Gene3D" id="2.40.50.100">
    <property type="match status" value="1"/>
</dbReference>
<dbReference type="HAMAP" id="MF_00272">
    <property type="entry name" value="GcvH"/>
    <property type="match status" value="1"/>
</dbReference>
<dbReference type="InterPro" id="IPR003016">
    <property type="entry name" value="2-oxoA_DH_lipoyl-BS"/>
</dbReference>
<dbReference type="InterPro" id="IPR000089">
    <property type="entry name" value="Biotin_lipoyl"/>
</dbReference>
<dbReference type="InterPro" id="IPR002930">
    <property type="entry name" value="GCV_H"/>
</dbReference>
<dbReference type="InterPro" id="IPR033753">
    <property type="entry name" value="GCV_H/Fam206"/>
</dbReference>
<dbReference type="InterPro" id="IPR017453">
    <property type="entry name" value="GCV_H_sub"/>
</dbReference>
<dbReference type="InterPro" id="IPR011053">
    <property type="entry name" value="Single_hybrid_motif"/>
</dbReference>
<dbReference type="NCBIfam" id="TIGR00527">
    <property type="entry name" value="gcvH"/>
    <property type="match status" value="1"/>
</dbReference>
<dbReference type="NCBIfam" id="NF002270">
    <property type="entry name" value="PRK01202.1"/>
    <property type="match status" value="1"/>
</dbReference>
<dbReference type="PANTHER" id="PTHR11715">
    <property type="entry name" value="GLYCINE CLEAVAGE SYSTEM H PROTEIN"/>
    <property type="match status" value="1"/>
</dbReference>
<dbReference type="PANTHER" id="PTHR11715:SF3">
    <property type="entry name" value="GLYCINE CLEAVAGE SYSTEM H PROTEIN-RELATED"/>
    <property type="match status" value="1"/>
</dbReference>
<dbReference type="Pfam" id="PF01597">
    <property type="entry name" value="GCV_H"/>
    <property type="match status" value="1"/>
</dbReference>
<dbReference type="SUPFAM" id="SSF51230">
    <property type="entry name" value="Single hybrid motif"/>
    <property type="match status" value="1"/>
</dbReference>
<dbReference type="PROSITE" id="PS50968">
    <property type="entry name" value="BIOTINYL_LIPOYL"/>
    <property type="match status" value="1"/>
</dbReference>
<dbReference type="PROSITE" id="PS00189">
    <property type="entry name" value="LIPOYL"/>
    <property type="match status" value="1"/>
</dbReference>
<organism>
    <name type="scientific">Leptospira biflexa serovar Patoc (strain Patoc 1 / Ames)</name>
    <dbReference type="NCBI Taxonomy" id="355278"/>
    <lineage>
        <taxon>Bacteria</taxon>
        <taxon>Pseudomonadati</taxon>
        <taxon>Spirochaetota</taxon>
        <taxon>Spirochaetia</taxon>
        <taxon>Leptospirales</taxon>
        <taxon>Leptospiraceae</taxon>
        <taxon>Leptospira</taxon>
    </lineage>
</organism>
<accession>B0SGN9</accession>
<feature type="chain" id="PRO_1000114526" description="Glycine cleavage system H protein">
    <location>
        <begin position="1"/>
        <end position="130"/>
    </location>
</feature>
<feature type="domain" description="Lipoyl-binding" evidence="2">
    <location>
        <begin position="25"/>
        <end position="106"/>
    </location>
</feature>
<feature type="modified residue" description="N6-lipoyllysine" evidence="1">
    <location>
        <position position="66"/>
    </location>
</feature>
<name>GCSH_LEPBA</name>
<reference key="1">
    <citation type="journal article" date="2008" name="PLoS ONE">
        <title>Genome sequence of the saprophyte Leptospira biflexa provides insights into the evolution of Leptospira and the pathogenesis of leptospirosis.</title>
        <authorList>
            <person name="Picardeau M."/>
            <person name="Bulach D.M."/>
            <person name="Bouchier C."/>
            <person name="Zuerner R.L."/>
            <person name="Zidane N."/>
            <person name="Wilson P.J."/>
            <person name="Creno S."/>
            <person name="Kuczek E.S."/>
            <person name="Bommezzadri S."/>
            <person name="Davis J.C."/>
            <person name="McGrath A."/>
            <person name="Johnson M.J."/>
            <person name="Boursaux-Eude C."/>
            <person name="Seemann T."/>
            <person name="Rouy Z."/>
            <person name="Coppel R.L."/>
            <person name="Rood J.I."/>
            <person name="Lajus A."/>
            <person name="Davies J.K."/>
            <person name="Medigue C."/>
            <person name="Adler B."/>
        </authorList>
    </citation>
    <scope>NUCLEOTIDE SEQUENCE [LARGE SCALE GENOMIC DNA]</scope>
    <source>
        <strain>Patoc 1 / Ames</strain>
    </source>
</reference>
<keyword id="KW-0450">Lipoyl</keyword>